<feature type="signal peptide" evidence="2">
    <location>
        <begin position="1"/>
        <end position="26"/>
    </location>
</feature>
<feature type="chain" id="PRO_0000428300" description="Probable monoacyl phosphatidylinositol tetramannoside-binding protein LpqW">
    <location>
        <begin position="27"/>
        <end position="635"/>
    </location>
</feature>
<feature type="region of interest" description="Disordered" evidence="3">
    <location>
        <begin position="32"/>
        <end position="52"/>
    </location>
</feature>
<feature type="region of interest" description="Disordered" evidence="3">
    <location>
        <begin position="389"/>
        <end position="412"/>
    </location>
</feature>
<feature type="region of interest" description="Disordered" evidence="3">
    <location>
        <begin position="511"/>
        <end position="551"/>
    </location>
</feature>
<feature type="compositionally biased region" description="Low complexity" evidence="3">
    <location>
        <begin position="390"/>
        <end position="411"/>
    </location>
</feature>
<feature type="compositionally biased region" description="Low complexity" evidence="3">
    <location>
        <begin position="511"/>
        <end position="531"/>
    </location>
</feature>
<protein>
    <recommendedName>
        <fullName>Probable monoacyl phosphatidylinositol tetramannoside-binding protein LpqW</fullName>
    </recommendedName>
</protein>
<dbReference type="EMBL" id="AE000516">
    <property type="protein sequence ID" value="AAK45460.1"/>
    <property type="molecule type" value="Genomic_DNA"/>
</dbReference>
<dbReference type="PIR" id="F70874">
    <property type="entry name" value="F70874"/>
</dbReference>
<dbReference type="RefSeq" id="WP_003406102.1">
    <property type="nucleotide sequence ID" value="NZ_KK341227.1"/>
</dbReference>
<dbReference type="SMR" id="P9WGU6"/>
<dbReference type="GeneID" id="45425138"/>
<dbReference type="KEGG" id="mtc:MT1203"/>
<dbReference type="PATRIC" id="fig|83331.31.peg.1303"/>
<dbReference type="HOGENOM" id="CLU_027950_0_0_11"/>
<dbReference type="UniPathway" id="UPA00949"/>
<dbReference type="Proteomes" id="UP000001020">
    <property type="component" value="Chromosome"/>
</dbReference>
<dbReference type="GO" id="GO:1904680">
    <property type="term" value="F:peptide transmembrane transporter activity"/>
    <property type="evidence" value="ECO:0007669"/>
    <property type="project" value="TreeGrafter"/>
</dbReference>
<dbReference type="GO" id="GO:0015833">
    <property type="term" value="P:peptide transport"/>
    <property type="evidence" value="ECO:0007669"/>
    <property type="project" value="TreeGrafter"/>
</dbReference>
<dbReference type="GO" id="GO:0046488">
    <property type="term" value="P:phosphatidylinositol metabolic process"/>
    <property type="evidence" value="ECO:0007669"/>
    <property type="project" value="UniProtKB-UniPathway"/>
</dbReference>
<dbReference type="GO" id="GO:0008654">
    <property type="term" value="P:phospholipid biosynthetic process"/>
    <property type="evidence" value="ECO:0007669"/>
    <property type="project" value="UniProtKB-KW"/>
</dbReference>
<dbReference type="CDD" id="cd08501">
    <property type="entry name" value="PBP2_Lpqw"/>
    <property type="match status" value="1"/>
</dbReference>
<dbReference type="FunFam" id="3.90.76.10:FF:000006">
    <property type="entry name" value="Monoacyl phosphatidylinositol tetramannoside-binding protein"/>
    <property type="match status" value="1"/>
</dbReference>
<dbReference type="Gene3D" id="3.90.76.10">
    <property type="entry name" value="Dipeptide-binding Protein, Domain 1"/>
    <property type="match status" value="1"/>
</dbReference>
<dbReference type="Gene3D" id="3.10.105.10">
    <property type="entry name" value="Dipeptide-binding Protein, Domain 3"/>
    <property type="match status" value="1"/>
</dbReference>
<dbReference type="InterPro" id="IPR039424">
    <property type="entry name" value="SBP_5"/>
</dbReference>
<dbReference type="InterPro" id="IPR000914">
    <property type="entry name" value="SBP_5_dom"/>
</dbReference>
<dbReference type="PANTHER" id="PTHR30290:SF65">
    <property type="entry name" value="MONOACYL PHOSPHATIDYLINOSITOL TETRAMANNOSIDE-BINDING PROTEIN LPQW-RELATED"/>
    <property type="match status" value="1"/>
</dbReference>
<dbReference type="PANTHER" id="PTHR30290">
    <property type="entry name" value="PERIPLASMIC BINDING COMPONENT OF ABC TRANSPORTER"/>
    <property type="match status" value="1"/>
</dbReference>
<dbReference type="Pfam" id="PF00496">
    <property type="entry name" value="SBP_bac_5"/>
    <property type="match status" value="1"/>
</dbReference>
<dbReference type="SUPFAM" id="SSF53850">
    <property type="entry name" value="Periplasmic binding protein-like II"/>
    <property type="match status" value="1"/>
</dbReference>
<gene>
    <name type="primary">lpqW</name>
    <name type="ordered locus">MT1203</name>
</gene>
<evidence type="ECO:0000250" key="1"/>
<evidence type="ECO:0000255" key="2"/>
<evidence type="ECO:0000256" key="3">
    <source>
        <dbReference type="SAM" id="MobiDB-lite"/>
    </source>
</evidence>
<evidence type="ECO:0000305" key="4"/>
<name>LPQW_MYCTO</name>
<organism>
    <name type="scientific">Mycobacterium tuberculosis (strain CDC 1551 / Oshkosh)</name>
    <dbReference type="NCBI Taxonomy" id="83331"/>
    <lineage>
        <taxon>Bacteria</taxon>
        <taxon>Bacillati</taxon>
        <taxon>Actinomycetota</taxon>
        <taxon>Actinomycetes</taxon>
        <taxon>Mycobacteriales</taxon>
        <taxon>Mycobacteriaceae</taxon>
        <taxon>Mycobacterium</taxon>
        <taxon>Mycobacterium tuberculosis complex</taxon>
    </lineage>
</organism>
<sequence length="635" mass="66130">MGVPSPVRRVCVTVGALVALACMVLAGCTVSPPPAPQSTDTPRSTPPPPRRPTQIIMGIDWIGPGFNPHLLSDLSPVNAAISALVLPSAFRPIPDPNTPTGSRWEMDPTLLVSADVTNNHPFTVTYKIRPEAQWTDNAPIAADDFWYLWQQMVTQPGVVDPAGYHLITSVQSLEGGKQAVVTFAQPYPAWRELFTDILPAHIVKDIPGGFASGLARALPVTGGQFRVENIDPQRDEILIARNDRYWGPPSKPGIILFRRAGAPAALADSVRNGDTQVAQVHGGSAAFAQLSAIPDVRTARIVTPRVMQFTLRANVPKLADTQVRKAILGLLDVDLLAAVGAGTDNTVTLDQAQIRSPSDPGYVPTAPPAMSSAAALGLLEASGFQVDTNTSVSPAPSVPDSTTTSVSTGPPEVIRGRISKDGEQLTLVIGVAANDPTSVAVANTAADQLRDVGIAATVLALDPVTLYHDALNDNRVDAIVGWRQAGGNLATLLASRYGCPALQATTVPAANAPTTAPSAPIGPTPSAAPDTATPPPTAPRRPSDPGALVKAPSNLTGICDRSIQSNIDAALNGTKNINDVITAVEPRLWNMSTVLPILQDTTIVAAGPSVQNVSLSGAVPVGIVGDAGQWVKTGQ</sequence>
<reference key="1">
    <citation type="journal article" date="2002" name="J. Bacteriol.">
        <title>Whole-genome comparison of Mycobacterium tuberculosis clinical and laboratory strains.</title>
        <authorList>
            <person name="Fleischmann R.D."/>
            <person name="Alland D."/>
            <person name="Eisen J.A."/>
            <person name="Carpenter L."/>
            <person name="White O."/>
            <person name="Peterson J.D."/>
            <person name="DeBoy R.T."/>
            <person name="Dodson R.J."/>
            <person name="Gwinn M.L."/>
            <person name="Haft D.H."/>
            <person name="Hickey E.K."/>
            <person name="Kolonay J.F."/>
            <person name="Nelson W.C."/>
            <person name="Umayam L.A."/>
            <person name="Ermolaeva M.D."/>
            <person name="Salzberg S.L."/>
            <person name="Delcher A."/>
            <person name="Utterback T.R."/>
            <person name="Weidman J.F."/>
            <person name="Khouri H.M."/>
            <person name="Gill J."/>
            <person name="Mikula A."/>
            <person name="Bishai W."/>
            <person name="Jacobs W.R. Jr."/>
            <person name="Venter J.C."/>
            <person name="Fraser C.M."/>
        </authorList>
    </citation>
    <scope>NUCLEOTIDE SEQUENCE [LARGE SCALE GENOMIC DNA]</scope>
    <source>
        <strain>CDC 1551 / Oshkosh</strain>
    </source>
</reference>
<keyword id="KW-0444">Lipid biosynthesis</keyword>
<keyword id="KW-0443">Lipid metabolism</keyword>
<keyword id="KW-0594">Phospholipid biosynthesis</keyword>
<keyword id="KW-1208">Phospholipid metabolism</keyword>
<keyword id="KW-1185">Reference proteome</keyword>
<keyword id="KW-0732">Signal</keyword>
<keyword id="KW-0843">Virulence</keyword>
<proteinExistence type="inferred from homology"/>
<accession>P9WGU6</accession>
<accession>L0T633</accession>
<accession>O50422</accession>
<accession>Q7D8Q4</accession>
<comment type="function">
    <text evidence="1">May directly or indirectly regulate the accessibility of the key branch point intermediate, monoacyl phosphatidylinositol tetramannoside (AcPIM4), to the elongating alpha-1,6 mannosyltransferases which could regulate the lipoarabinomannans (LAMs) biosynthesis.</text>
</comment>
<comment type="pathway">
    <text>Phospholipid metabolism; phosphatidylinositol metabolism.</text>
</comment>
<comment type="similarity">
    <text evidence="4">Belongs to the bacterial solute-binding protein 5 family.</text>
</comment>